<organism>
    <name type="scientific">Protopterus dolloi</name>
    <name type="common">Slender lungfish</name>
    <dbReference type="NCBI Taxonomy" id="27779"/>
    <lineage>
        <taxon>Eukaryota</taxon>
        <taxon>Metazoa</taxon>
        <taxon>Chordata</taxon>
        <taxon>Craniata</taxon>
        <taxon>Vertebrata</taxon>
        <taxon>Euteleostomi</taxon>
        <taxon>Dipnomorpha</taxon>
        <taxon>Ceratodontiformes</taxon>
        <taxon>Lepidosirenoidei</taxon>
        <taxon>Protopteridae</taxon>
        <taxon>Protopterus</taxon>
    </lineage>
</organism>
<sequence length="52" mass="5949">GKSEEELAEFFRIFDKNADGYIDAEELAEIIRSSGEHVTDEEIEELMKDGDK</sequence>
<dbReference type="SMR" id="P81074"/>
<dbReference type="GO" id="GO:0016460">
    <property type="term" value="C:myosin II complex"/>
    <property type="evidence" value="ECO:0007669"/>
    <property type="project" value="TreeGrafter"/>
</dbReference>
<dbReference type="GO" id="GO:0005509">
    <property type="term" value="F:calcium ion binding"/>
    <property type="evidence" value="ECO:0007669"/>
    <property type="project" value="InterPro"/>
</dbReference>
<dbReference type="CDD" id="cd00051">
    <property type="entry name" value="EFh"/>
    <property type="match status" value="1"/>
</dbReference>
<dbReference type="FunFam" id="1.10.238.10:FF:000003">
    <property type="entry name" value="Calmodulin A"/>
    <property type="match status" value="1"/>
</dbReference>
<dbReference type="Gene3D" id="1.10.238.10">
    <property type="entry name" value="EF-hand"/>
    <property type="match status" value="1"/>
</dbReference>
<dbReference type="InterPro" id="IPR050230">
    <property type="entry name" value="CALM/Myosin/TropC-like"/>
</dbReference>
<dbReference type="InterPro" id="IPR011992">
    <property type="entry name" value="EF-hand-dom_pair"/>
</dbReference>
<dbReference type="InterPro" id="IPR018247">
    <property type="entry name" value="EF_Hand_1_Ca_BS"/>
</dbReference>
<dbReference type="InterPro" id="IPR002048">
    <property type="entry name" value="EF_hand_dom"/>
</dbReference>
<dbReference type="PANTHER" id="PTHR23048">
    <property type="entry name" value="MYOSIN LIGHT CHAIN 1, 3"/>
    <property type="match status" value="1"/>
</dbReference>
<dbReference type="PANTHER" id="PTHR23048:SF57">
    <property type="entry name" value="TROPONIN C2, FAST SKELETAL TYPE"/>
    <property type="match status" value="1"/>
</dbReference>
<dbReference type="Pfam" id="PF13499">
    <property type="entry name" value="EF-hand_7"/>
    <property type="match status" value="1"/>
</dbReference>
<dbReference type="SMART" id="SM00054">
    <property type="entry name" value="EFh"/>
    <property type="match status" value="1"/>
</dbReference>
<dbReference type="SUPFAM" id="SSF47473">
    <property type="entry name" value="EF-hand"/>
    <property type="match status" value="1"/>
</dbReference>
<dbReference type="PROSITE" id="PS00018">
    <property type="entry name" value="EF_HAND_1"/>
    <property type="match status" value="1"/>
</dbReference>
<dbReference type="PROSITE" id="PS50222">
    <property type="entry name" value="EF_HAND_2"/>
    <property type="match status" value="2"/>
</dbReference>
<accession>P81074</accession>
<keyword id="KW-0106">Calcium</keyword>
<keyword id="KW-0903">Direct protein sequencing</keyword>
<keyword id="KW-0479">Metal-binding</keyword>
<keyword id="KW-0514">Muscle protein</keyword>
<keyword id="KW-0677">Repeat</keyword>
<feature type="chain" id="PRO_0000073711" description="Troponin C, skeletal muscle">
    <location>
        <begin position="1" status="less than"/>
        <end position="52" status="greater than"/>
    </location>
</feature>
<feature type="domain" description="EF-hand 1" evidence="1">
    <location>
        <begin position="2"/>
        <end position="37"/>
    </location>
</feature>
<feature type="domain" description="EF-hand 2" evidence="1">
    <location>
        <begin position="38"/>
        <end position="52" status="greater than"/>
    </location>
</feature>
<feature type="binding site" evidence="1">
    <location>
        <position position="15"/>
    </location>
    <ligand>
        <name>Ca(2+)</name>
        <dbReference type="ChEBI" id="CHEBI:29108"/>
    </ligand>
</feature>
<feature type="binding site" evidence="1">
    <location>
        <position position="17"/>
    </location>
    <ligand>
        <name>Ca(2+)</name>
        <dbReference type="ChEBI" id="CHEBI:29108"/>
    </ligand>
</feature>
<feature type="binding site" evidence="1">
    <location>
        <position position="19"/>
    </location>
    <ligand>
        <name>Ca(2+)</name>
        <dbReference type="ChEBI" id="CHEBI:29108"/>
    </ligand>
</feature>
<feature type="binding site" evidence="1">
    <location>
        <position position="21"/>
    </location>
    <ligand>
        <name>Ca(2+)</name>
        <dbReference type="ChEBI" id="CHEBI:29108"/>
    </ligand>
</feature>
<feature type="binding site" evidence="1">
    <location>
        <position position="26"/>
    </location>
    <ligand>
        <name>Ca(2+)</name>
        <dbReference type="ChEBI" id="CHEBI:29108"/>
    </ligand>
</feature>
<feature type="non-terminal residue">
    <location>
        <position position="1"/>
    </location>
</feature>
<feature type="non-terminal residue">
    <location>
        <position position="52"/>
    </location>
</feature>
<proteinExistence type="evidence at protein level"/>
<comment type="function">
    <text>Troponin is the central regulatory protein of striated muscle contraction. Tn consists of three components: Tn-I which is the inhibitor of actomyosin ATPase, Tn-T which contains the binding site for tropomyosin and Tn-C. The binding of calcium to Tn-C abolishes the inhibitory action of Tn on actin filaments.</text>
</comment>
<comment type="miscellaneous">
    <text>Skeletal muscle troponin C binds four calcium ions.</text>
</comment>
<comment type="similarity">
    <text evidence="2">Belongs to the troponin C family.</text>
</comment>
<protein>
    <recommendedName>
        <fullName>Troponin C, skeletal muscle</fullName>
    </recommendedName>
</protein>
<reference key="1">
    <citation type="journal article" date="1997" name="Comp. Biochem. Physiol.">
        <title>Characterization of the single tyrosine containing troponin C from lungfish white muscle. Comparison with several fast skeletal muscle troponin C's from fish species.</title>
        <authorList>
            <person name="Francois J.M."/>
            <person name="Altintas A."/>
            <person name="Gerday C."/>
        </authorList>
    </citation>
    <scope>PROTEIN SEQUENCE</scope>
</reference>
<name>TNNC2_PRODO</name>
<evidence type="ECO:0000255" key="1">
    <source>
        <dbReference type="PROSITE-ProRule" id="PRU00448"/>
    </source>
</evidence>
<evidence type="ECO:0000305" key="2"/>